<reference key="1">
    <citation type="journal article" date="1998" name="Curr. Microbiol.">
        <title>Sequence analysis of a 34.7-kb DNA segment from the genome of Buchnera aphidicola (endosymbiont of aphids) containing groEL, dnaA, the atp operon, gidA, and rho.</title>
        <authorList>
            <person name="Clark M.A."/>
            <person name="Baumann L."/>
            <person name="Baumann P."/>
        </authorList>
    </citation>
    <scope>NUCLEOTIDE SEQUENCE [GENOMIC DNA]</scope>
</reference>
<reference key="2">
    <citation type="journal article" date="2002" name="Science">
        <title>50 million years of genomic stasis in endosymbiotic bacteria.</title>
        <authorList>
            <person name="Tamas I."/>
            <person name="Klasson L."/>
            <person name="Canbaeck B."/>
            <person name="Naeslund A.K."/>
            <person name="Eriksson A.-S."/>
            <person name="Wernegreen J.J."/>
            <person name="Sandstroem J.P."/>
            <person name="Moran N.A."/>
            <person name="Andersson S.G.E."/>
        </authorList>
    </citation>
    <scope>NUCLEOTIDE SEQUENCE [LARGE SCALE GENOMIC DNA]</scope>
    <source>
        <strain>Sg</strain>
    </source>
</reference>
<organism>
    <name type="scientific">Buchnera aphidicola subsp. Schizaphis graminum (strain Sg)</name>
    <dbReference type="NCBI Taxonomy" id="198804"/>
    <lineage>
        <taxon>Bacteria</taxon>
        <taxon>Pseudomonadati</taxon>
        <taxon>Pseudomonadota</taxon>
        <taxon>Gammaproteobacteria</taxon>
        <taxon>Enterobacterales</taxon>
        <taxon>Erwiniaceae</taxon>
        <taxon>Buchnera</taxon>
    </lineage>
</organism>
<keyword id="KW-1015">Disulfide bond</keyword>
<keyword id="KW-0249">Electron transport</keyword>
<keyword id="KW-0676">Redox-active center</keyword>
<keyword id="KW-0813">Transport</keyword>
<dbReference type="EMBL" id="AF008210">
    <property type="protein sequence ID" value="AAC38128.1"/>
    <property type="molecule type" value="Genomic_DNA"/>
</dbReference>
<dbReference type="EMBL" id="AE013218">
    <property type="protein sequence ID" value="AAM68107.1"/>
    <property type="molecule type" value="Genomic_DNA"/>
</dbReference>
<dbReference type="RefSeq" id="WP_011054073.1">
    <property type="nucleotide sequence ID" value="NC_004061.1"/>
</dbReference>
<dbReference type="SMR" id="O51890"/>
<dbReference type="STRING" id="198804.BUsg_573"/>
<dbReference type="GeneID" id="93004054"/>
<dbReference type="KEGG" id="bas:BUsg_573"/>
<dbReference type="eggNOG" id="COG3118">
    <property type="taxonomic scope" value="Bacteria"/>
</dbReference>
<dbReference type="HOGENOM" id="CLU_090389_10_4_6"/>
<dbReference type="Proteomes" id="UP000000416">
    <property type="component" value="Chromosome"/>
</dbReference>
<dbReference type="GO" id="GO:0005829">
    <property type="term" value="C:cytosol"/>
    <property type="evidence" value="ECO:0007669"/>
    <property type="project" value="TreeGrafter"/>
</dbReference>
<dbReference type="GO" id="GO:0015035">
    <property type="term" value="F:protein-disulfide reductase activity"/>
    <property type="evidence" value="ECO:0007669"/>
    <property type="project" value="InterPro"/>
</dbReference>
<dbReference type="GO" id="GO:0045454">
    <property type="term" value="P:cell redox homeostasis"/>
    <property type="evidence" value="ECO:0007669"/>
    <property type="project" value="TreeGrafter"/>
</dbReference>
<dbReference type="CDD" id="cd02947">
    <property type="entry name" value="TRX_family"/>
    <property type="match status" value="1"/>
</dbReference>
<dbReference type="FunFam" id="3.40.30.10:FF:000001">
    <property type="entry name" value="Thioredoxin"/>
    <property type="match status" value="1"/>
</dbReference>
<dbReference type="Gene3D" id="3.40.30.10">
    <property type="entry name" value="Glutaredoxin"/>
    <property type="match status" value="1"/>
</dbReference>
<dbReference type="InterPro" id="IPR005746">
    <property type="entry name" value="Thioredoxin"/>
</dbReference>
<dbReference type="InterPro" id="IPR036249">
    <property type="entry name" value="Thioredoxin-like_sf"/>
</dbReference>
<dbReference type="InterPro" id="IPR013766">
    <property type="entry name" value="Thioredoxin_domain"/>
</dbReference>
<dbReference type="NCBIfam" id="NF006898">
    <property type="entry name" value="PRK09381.1"/>
    <property type="match status" value="1"/>
</dbReference>
<dbReference type="NCBIfam" id="TIGR01068">
    <property type="entry name" value="thioredoxin"/>
    <property type="match status" value="1"/>
</dbReference>
<dbReference type="PANTHER" id="PTHR45663">
    <property type="entry name" value="GEO12009P1"/>
    <property type="match status" value="1"/>
</dbReference>
<dbReference type="PANTHER" id="PTHR45663:SF11">
    <property type="entry name" value="GEO12009P1"/>
    <property type="match status" value="1"/>
</dbReference>
<dbReference type="Pfam" id="PF00085">
    <property type="entry name" value="Thioredoxin"/>
    <property type="match status" value="1"/>
</dbReference>
<dbReference type="PIRSF" id="PIRSF000077">
    <property type="entry name" value="Thioredoxin"/>
    <property type="match status" value="1"/>
</dbReference>
<dbReference type="PRINTS" id="PR00421">
    <property type="entry name" value="THIOREDOXIN"/>
</dbReference>
<dbReference type="SUPFAM" id="SSF52833">
    <property type="entry name" value="Thioredoxin-like"/>
    <property type="match status" value="1"/>
</dbReference>
<dbReference type="PROSITE" id="PS51352">
    <property type="entry name" value="THIOREDOXIN_2"/>
    <property type="match status" value="1"/>
</dbReference>
<protein>
    <recommendedName>
        <fullName>Thioredoxin</fullName>
        <shortName>Trx</shortName>
    </recommendedName>
</protein>
<proteinExistence type="inferred from homology"/>
<comment type="function">
    <text>Participates in various redox reactions through the reversible oxidation of its active center dithiol to a disulfide and catalyzes dithiol-disulfide exchange reactions.</text>
</comment>
<comment type="similarity">
    <text evidence="2">Belongs to the thioredoxin family.</text>
</comment>
<evidence type="ECO:0000255" key="1">
    <source>
        <dbReference type="PROSITE-ProRule" id="PRU00691"/>
    </source>
</evidence>
<evidence type="ECO:0000305" key="2"/>
<name>THIO_BUCAP</name>
<gene>
    <name type="primary">trxA</name>
    <name type="ordered locus">BUsg_573</name>
</gene>
<accession>O51890</accession>
<feature type="chain" id="PRO_0000120079" description="Thioredoxin">
    <location>
        <begin position="1"/>
        <end position="108"/>
    </location>
</feature>
<feature type="domain" description="Thioredoxin" evidence="1">
    <location>
        <begin position="2"/>
        <end position="108"/>
    </location>
</feature>
<feature type="disulfide bond" description="Redox-active" evidence="1">
    <location>
        <begin position="32"/>
        <end position="35"/>
    </location>
</feature>
<sequence length="108" mass="12440">MNKIIELTDQNFEKEVLEHKSFVLVDFWAEWCNPCKILAPILEEIAQEYFNKIKVGKLNIEKNPNTAPIYSIRGIPALLLFHGREVLATKVGAISKLQLKDFLDENIK</sequence>